<proteinExistence type="evidence at protein level"/>
<gene>
    <name type="primary">csn7</name>
    <name type="ORF">DDB_G0271282</name>
</gene>
<name>CSN7_DICDI</name>
<dbReference type="EMBL" id="DQ309435">
    <property type="protein sequence ID" value="ABC46699.1"/>
    <property type="molecule type" value="mRNA"/>
</dbReference>
<dbReference type="EMBL" id="AAFI02000006">
    <property type="protein sequence ID" value="EAL71771.1"/>
    <property type="molecule type" value="Genomic_DNA"/>
</dbReference>
<dbReference type="RefSeq" id="XP_645677.1">
    <property type="nucleotide sequence ID" value="XM_640585.1"/>
</dbReference>
<dbReference type="SMR" id="Q55BD5"/>
<dbReference type="FunCoup" id="Q55BD5">
    <property type="interactions" value="808"/>
</dbReference>
<dbReference type="STRING" id="44689.Q55BD5"/>
<dbReference type="PaxDb" id="44689-DDB0233106"/>
<dbReference type="EnsemblProtists" id="EAL71771">
    <property type="protein sequence ID" value="EAL71771"/>
    <property type="gene ID" value="DDB_G0271282"/>
</dbReference>
<dbReference type="GeneID" id="8617870"/>
<dbReference type="KEGG" id="ddi:DDB_G0271282"/>
<dbReference type="dictyBase" id="DDB_G0271282">
    <property type="gene designation" value="csn7"/>
</dbReference>
<dbReference type="VEuPathDB" id="AmoebaDB:DDB_G0271282"/>
<dbReference type="eggNOG" id="KOG3250">
    <property type="taxonomic scope" value="Eukaryota"/>
</dbReference>
<dbReference type="HOGENOM" id="CLU_054426_2_1_1"/>
<dbReference type="InParanoid" id="Q55BD5"/>
<dbReference type="OMA" id="GTYKQFR"/>
<dbReference type="PhylomeDB" id="Q55BD5"/>
<dbReference type="Reactome" id="R-DDI-5696394">
    <property type="pathway name" value="DNA Damage Recognition in GG-NER"/>
</dbReference>
<dbReference type="Reactome" id="R-DDI-6781823">
    <property type="pathway name" value="Formation of TC-NER Pre-Incision Complex"/>
</dbReference>
<dbReference type="Reactome" id="R-DDI-8856825">
    <property type="pathway name" value="Cargo recognition for clathrin-mediated endocytosis"/>
</dbReference>
<dbReference type="Reactome" id="R-DDI-8951664">
    <property type="pathway name" value="Neddylation"/>
</dbReference>
<dbReference type="PRO" id="PR:Q55BD5"/>
<dbReference type="Proteomes" id="UP000002195">
    <property type="component" value="Chromosome 2"/>
</dbReference>
<dbReference type="GO" id="GO:0008180">
    <property type="term" value="C:COP9 signalosome"/>
    <property type="evidence" value="ECO:0000353"/>
    <property type="project" value="dictyBase"/>
</dbReference>
<dbReference type="GO" id="GO:0005737">
    <property type="term" value="C:cytoplasm"/>
    <property type="evidence" value="ECO:0007669"/>
    <property type="project" value="UniProtKB-SubCell"/>
</dbReference>
<dbReference type="InterPro" id="IPR045237">
    <property type="entry name" value="COPS7/eIF3m"/>
</dbReference>
<dbReference type="InterPro" id="IPR000717">
    <property type="entry name" value="PCI_dom"/>
</dbReference>
<dbReference type="PANTHER" id="PTHR15350:SF5">
    <property type="entry name" value="COP9 SIGNALOSOME COMPLEX SUBUNIT 7"/>
    <property type="match status" value="1"/>
</dbReference>
<dbReference type="PANTHER" id="PTHR15350">
    <property type="entry name" value="COP9 SIGNALOSOME COMPLEX SUBUNIT 7/DENDRITIC CELL PROTEIN GA17"/>
    <property type="match status" value="1"/>
</dbReference>
<dbReference type="Pfam" id="PF22061">
    <property type="entry name" value="CSN7_HB_subdom"/>
    <property type="match status" value="1"/>
</dbReference>
<dbReference type="Pfam" id="PF01399">
    <property type="entry name" value="PCI"/>
    <property type="match status" value="1"/>
</dbReference>
<dbReference type="SMART" id="SM00088">
    <property type="entry name" value="PINT"/>
    <property type="match status" value="1"/>
</dbReference>
<dbReference type="PROSITE" id="PS50250">
    <property type="entry name" value="PCI"/>
    <property type="match status" value="1"/>
</dbReference>
<feature type="chain" id="PRO_0000327767" description="COP9 signalosome complex subunit 7">
    <location>
        <begin position="1"/>
        <end position="259"/>
    </location>
</feature>
<feature type="domain" description="PCI" evidence="2">
    <location>
        <begin position="1"/>
        <end position="161"/>
    </location>
</feature>
<keyword id="KW-0963">Cytoplasm</keyword>
<keyword id="KW-0539">Nucleus</keyword>
<keyword id="KW-1185">Reference proteome</keyword>
<keyword id="KW-0736">Signalosome</keyword>
<accession>Q55BD5</accession>
<accession>Q2PQ72</accession>
<evidence type="ECO:0000250" key="1"/>
<evidence type="ECO:0000255" key="2">
    <source>
        <dbReference type="PROSITE-ProRule" id="PRU01185"/>
    </source>
</evidence>
<evidence type="ECO:0000269" key="3">
    <source>
    </source>
</evidence>
<evidence type="ECO:0000305" key="4"/>
<sequence>MTTQQETLTDGNALKQFVVLAKSSKGRAIVSIIEKALNHPSVFVFGELLDMPNVQQLKETEFKNYYDLLLIFAYGSFIDYKNKKDSLPQLTPQMITKLKQLTIVFLSSTSNVIPYSVLQEQIEITNVRELEDLIIDSIYQNIIKGKLDQKNKHLEIDFSIGRDVQPEQLDSMINCLNNWSSTSQKLLDDISGLITHSDKVHLQYRKEKEEFESKFEIAKLNTKNDSPAEQLYYDSMEYSDEVRMKKGPKIKGKDYNKRP</sequence>
<reference key="1">
    <citation type="journal article" date="2006" name="Eur. J. Cell Biol.">
        <title>The COP9 signalosome regulates cell proliferation of Dictyostelium discoideum.</title>
        <authorList>
            <person name="Rosel D."/>
            <person name="Kimmel A.R."/>
        </authorList>
    </citation>
    <scope>NUCLEOTIDE SEQUENCE [MRNA]</scope>
    <scope>IDENTIFICATION IN THE CSN COMPLEX</scope>
</reference>
<reference key="2">
    <citation type="journal article" date="2002" name="Nature">
        <title>Sequence and analysis of chromosome 2 of Dictyostelium discoideum.</title>
        <authorList>
            <person name="Gloeckner G."/>
            <person name="Eichinger L."/>
            <person name="Szafranski K."/>
            <person name="Pachebat J.A."/>
            <person name="Bankier A.T."/>
            <person name="Dear P.H."/>
            <person name="Lehmann R."/>
            <person name="Baumgart C."/>
            <person name="Parra G."/>
            <person name="Abril J.F."/>
            <person name="Guigo R."/>
            <person name="Kumpf K."/>
            <person name="Tunggal B."/>
            <person name="Cox E.C."/>
            <person name="Quail M.A."/>
            <person name="Platzer M."/>
            <person name="Rosenthal A."/>
            <person name="Noegel A.A."/>
        </authorList>
    </citation>
    <scope>NUCLEOTIDE SEQUENCE [LARGE SCALE GENOMIC DNA]</scope>
    <source>
        <strain>AX4</strain>
    </source>
</reference>
<reference key="3">
    <citation type="journal article" date="2005" name="Nature">
        <title>The genome of the social amoeba Dictyostelium discoideum.</title>
        <authorList>
            <person name="Eichinger L."/>
            <person name="Pachebat J.A."/>
            <person name="Gloeckner G."/>
            <person name="Rajandream M.A."/>
            <person name="Sucgang R."/>
            <person name="Berriman M."/>
            <person name="Song J."/>
            <person name="Olsen R."/>
            <person name="Szafranski K."/>
            <person name="Xu Q."/>
            <person name="Tunggal B."/>
            <person name="Kummerfeld S."/>
            <person name="Madera M."/>
            <person name="Konfortov B.A."/>
            <person name="Rivero F."/>
            <person name="Bankier A.T."/>
            <person name="Lehmann R."/>
            <person name="Hamlin N."/>
            <person name="Davies R."/>
            <person name="Gaudet P."/>
            <person name="Fey P."/>
            <person name="Pilcher K."/>
            <person name="Chen G."/>
            <person name="Saunders D."/>
            <person name="Sodergren E.J."/>
            <person name="Davis P."/>
            <person name="Kerhornou A."/>
            <person name="Nie X."/>
            <person name="Hall N."/>
            <person name="Anjard C."/>
            <person name="Hemphill L."/>
            <person name="Bason N."/>
            <person name="Farbrother P."/>
            <person name="Desany B."/>
            <person name="Just E."/>
            <person name="Morio T."/>
            <person name="Rost R."/>
            <person name="Churcher C.M."/>
            <person name="Cooper J."/>
            <person name="Haydock S."/>
            <person name="van Driessche N."/>
            <person name="Cronin A."/>
            <person name="Goodhead I."/>
            <person name="Muzny D.M."/>
            <person name="Mourier T."/>
            <person name="Pain A."/>
            <person name="Lu M."/>
            <person name="Harper D."/>
            <person name="Lindsay R."/>
            <person name="Hauser H."/>
            <person name="James K.D."/>
            <person name="Quiles M."/>
            <person name="Madan Babu M."/>
            <person name="Saito T."/>
            <person name="Buchrieser C."/>
            <person name="Wardroper A."/>
            <person name="Felder M."/>
            <person name="Thangavelu M."/>
            <person name="Johnson D."/>
            <person name="Knights A."/>
            <person name="Loulseged H."/>
            <person name="Mungall K.L."/>
            <person name="Oliver K."/>
            <person name="Price C."/>
            <person name="Quail M.A."/>
            <person name="Urushihara H."/>
            <person name="Hernandez J."/>
            <person name="Rabbinowitsch E."/>
            <person name="Steffen D."/>
            <person name="Sanders M."/>
            <person name="Ma J."/>
            <person name="Kohara Y."/>
            <person name="Sharp S."/>
            <person name="Simmonds M.N."/>
            <person name="Spiegler S."/>
            <person name="Tivey A."/>
            <person name="Sugano S."/>
            <person name="White B."/>
            <person name="Walker D."/>
            <person name="Woodward J.R."/>
            <person name="Winckler T."/>
            <person name="Tanaka Y."/>
            <person name="Shaulsky G."/>
            <person name="Schleicher M."/>
            <person name="Weinstock G.M."/>
            <person name="Rosenthal A."/>
            <person name="Cox E.C."/>
            <person name="Chisholm R.L."/>
            <person name="Gibbs R.A."/>
            <person name="Loomis W.F."/>
            <person name="Platzer M."/>
            <person name="Kay R.R."/>
            <person name="Williams J.G."/>
            <person name="Dear P.H."/>
            <person name="Noegel A.A."/>
            <person name="Barrell B.G."/>
            <person name="Kuspa A."/>
        </authorList>
    </citation>
    <scope>NUCLEOTIDE SEQUENCE [LARGE SCALE GENOMIC DNA]</scope>
    <source>
        <strain>AX4</strain>
    </source>
</reference>
<protein>
    <recommendedName>
        <fullName>COP9 signalosome complex subunit 7</fullName>
        <shortName>Signalosome subunit 7</shortName>
    </recommendedName>
</protein>
<organism>
    <name type="scientific">Dictyostelium discoideum</name>
    <name type="common">Social amoeba</name>
    <dbReference type="NCBI Taxonomy" id="44689"/>
    <lineage>
        <taxon>Eukaryota</taxon>
        <taxon>Amoebozoa</taxon>
        <taxon>Evosea</taxon>
        <taxon>Eumycetozoa</taxon>
        <taxon>Dictyostelia</taxon>
        <taxon>Dictyosteliales</taxon>
        <taxon>Dictyosteliaceae</taxon>
        <taxon>Dictyostelium</taxon>
    </lineage>
</organism>
<comment type="function">
    <text>Component of the COP9 signalosome complex (CSN), a complex involved in various cellular and developmental processes. The CSN complex is an essential regulator of the ubiquitin (Ubl) conjugation pathway by mediating the deneddylation of the cullin subunits of E3 ligase complexes, leading to modify the Ubl ligase activity.</text>
</comment>
<comment type="subunit">
    <text evidence="3">Component of the CSN complex. The holocomplex is comprised of 8 subunits csn1-8. In the complex, it probably interacts directly with csn2, csn5, csn6 and csn8.</text>
</comment>
<comment type="subcellular location">
    <subcellularLocation>
        <location evidence="1">Cytoplasm</location>
    </subcellularLocation>
    <subcellularLocation>
        <location evidence="1">Nucleus</location>
    </subcellularLocation>
</comment>
<comment type="similarity">
    <text evidence="4">Belongs to the CSN7/EIF3M family. CSN7 subfamily.</text>
</comment>